<gene>
    <name evidence="1" type="primary">recA</name>
    <name type="ordered locus">MAP_2848c</name>
</gene>
<dbReference type="EMBL" id="AE016958">
    <property type="protein sequence ID" value="AAS05165.1"/>
    <property type="status" value="ALT_INIT"/>
    <property type="molecule type" value="Genomic_DNA"/>
</dbReference>
<dbReference type="RefSeq" id="WP_003875210.1">
    <property type="nucleotide sequence ID" value="NZ_CP106873.1"/>
</dbReference>
<dbReference type="SMR" id="P62219"/>
<dbReference type="STRING" id="262316.MAP_2848c"/>
<dbReference type="DrugBank" id="DB02930">
    <property type="generic name" value="Adenosine 5'-[gamma-thio]triphosphate"/>
</dbReference>
<dbReference type="DrugBank" id="DB03222">
    <property type="generic name" value="dATP"/>
</dbReference>
<dbReference type="DrugBank" id="DB04444">
    <property type="generic name" value="Tetrafluoroaluminate Ion"/>
</dbReference>
<dbReference type="GeneID" id="75271015"/>
<dbReference type="KEGG" id="mpa:MAP_2848c"/>
<dbReference type="eggNOG" id="COG0468">
    <property type="taxonomic scope" value="Bacteria"/>
</dbReference>
<dbReference type="HOGENOM" id="CLU_040469_3_2_11"/>
<dbReference type="Proteomes" id="UP000000580">
    <property type="component" value="Chromosome"/>
</dbReference>
<dbReference type="GO" id="GO:0005829">
    <property type="term" value="C:cytosol"/>
    <property type="evidence" value="ECO:0007669"/>
    <property type="project" value="TreeGrafter"/>
</dbReference>
<dbReference type="GO" id="GO:0005524">
    <property type="term" value="F:ATP binding"/>
    <property type="evidence" value="ECO:0007669"/>
    <property type="project" value="UniProtKB-UniRule"/>
</dbReference>
<dbReference type="GO" id="GO:0016887">
    <property type="term" value="F:ATP hydrolysis activity"/>
    <property type="evidence" value="ECO:0007669"/>
    <property type="project" value="InterPro"/>
</dbReference>
<dbReference type="GO" id="GO:0140664">
    <property type="term" value="F:ATP-dependent DNA damage sensor activity"/>
    <property type="evidence" value="ECO:0007669"/>
    <property type="project" value="InterPro"/>
</dbReference>
<dbReference type="GO" id="GO:0003684">
    <property type="term" value="F:damaged DNA binding"/>
    <property type="evidence" value="ECO:0007669"/>
    <property type="project" value="UniProtKB-UniRule"/>
</dbReference>
<dbReference type="GO" id="GO:0003697">
    <property type="term" value="F:single-stranded DNA binding"/>
    <property type="evidence" value="ECO:0007669"/>
    <property type="project" value="UniProtKB-UniRule"/>
</dbReference>
<dbReference type="GO" id="GO:0006310">
    <property type="term" value="P:DNA recombination"/>
    <property type="evidence" value="ECO:0007669"/>
    <property type="project" value="UniProtKB-UniRule"/>
</dbReference>
<dbReference type="GO" id="GO:0006281">
    <property type="term" value="P:DNA repair"/>
    <property type="evidence" value="ECO:0007669"/>
    <property type="project" value="UniProtKB-UniRule"/>
</dbReference>
<dbReference type="GO" id="GO:0009432">
    <property type="term" value="P:SOS response"/>
    <property type="evidence" value="ECO:0007669"/>
    <property type="project" value="UniProtKB-UniRule"/>
</dbReference>
<dbReference type="CDD" id="cd00983">
    <property type="entry name" value="RecA"/>
    <property type="match status" value="1"/>
</dbReference>
<dbReference type="FunFam" id="3.40.50.300:FF:002436">
    <property type="entry name" value="Protein RecA"/>
    <property type="match status" value="1"/>
</dbReference>
<dbReference type="Gene3D" id="3.40.50.300">
    <property type="entry name" value="P-loop containing nucleotide triphosphate hydrolases"/>
    <property type="match status" value="1"/>
</dbReference>
<dbReference type="HAMAP" id="MF_00268">
    <property type="entry name" value="RecA"/>
    <property type="match status" value="1"/>
</dbReference>
<dbReference type="InterPro" id="IPR003593">
    <property type="entry name" value="AAA+_ATPase"/>
</dbReference>
<dbReference type="InterPro" id="IPR013765">
    <property type="entry name" value="DNA_recomb/repair_RecA"/>
</dbReference>
<dbReference type="InterPro" id="IPR020584">
    <property type="entry name" value="DNA_recomb/repair_RecA_CS"/>
</dbReference>
<dbReference type="InterPro" id="IPR027417">
    <property type="entry name" value="P-loop_NTPase"/>
</dbReference>
<dbReference type="InterPro" id="IPR049261">
    <property type="entry name" value="RecA-like_C"/>
</dbReference>
<dbReference type="InterPro" id="IPR049428">
    <property type="entry name" value="RecA-like_N"/>
</dbReference>
<dbReference type="InterPro" id="IPR020588">
    <property type="entry name" value="RecA_ATP-bd"/>
</dbReference>
<dbReference type="InterPro" id="IPR023400">
    <property type="entry name" value="RecA_C_sf"/>
</dbReference>
<dbReference type="InterPro" id="IPR020587">
    <property type="entry name" value="RecA_monomer-monomer_interface"/>
</dbReference>
<dbReference type="NCBIfam" id="TIGR02012">
    <property type="entry name" value="tigrfam_recA"/>
    <property type="match status" value="1"/>
</dbReference>
<dbReference type="PANTHER" id="PTHR45900:SF1">
    <property type="entry name" value="MITOCHONDRIAL DNA REPAIR PROTEIN RECA HOMOLOG-RELATED"/>
    <property type="match status" value="1"/>
</dbReference>
<dbReference type="PANTHER" id="PTHR45900">
    <property type="entry name" value="RECA"/>
    <property type="match status" value="1"/>
</dbReference>
<dbReference type="Pfam" id="PF00154">
    <property type="entry name" value="RecA"/>
    <property type="match status" value="1"/>
</dbReference>
<dbReference type="Pfam" id="PF21096">
    <property type="entry name" value="RecA_C"/>
    <property type="match status" value="1"/>
</dbReference>
<dbReference type="PRINTS" id="PR00142">
    <property type="entry name" value="RECA"/>
</dbReference>
<dbReference type="SMART" id="SM00382">
    <property type="entry name" value="AAA"/>
    <property type="match status" value="1"/>
</dbReference>
<dbReference type="SUPFAM" id="SSF52540">
    <property type="entry name" value="P-loop containing nucleoside triphosphate hydrolases"/>
    <property type="match status" value="1"/>
</dbReference>
<dbReference type="SUPFAM" id="SSF54752">
    <property type="entry name" value="RecA protein, C-terminal domain"/>
    <property type="match status" value="1"/>
</dbReference>
<dbReference type="PROSITE" id="PS00321">
    <property type="entry name" value="RECA_1"/>
    <property type="match status" value="1"/>
</dbReference>
<dbReference type="PROSITE" id="PS50162">
    <property type="entry name" value="RECA_2"/>
    <property type="match status" value="1"/>
</dbReference>
<dbReference type="PROSITE" id="PS50163">
    <property type="entry name" value="RECA_3"/>
    <property type="match status" value="1"/>
</dbReference>
<name>RECA_MYCPA</name>
<keyword id="KW-0067">ATP-binding</keyword>
<keyword id="KW-0963">Cytoplasm</keyword>
<keyword id="KW-0227">DNA damage</keyword>
<keyword id="KW-0233">DNA recombination</keyword>
<keyword id="KW-0234">DNA repair</keyword>
<keyword id="KW-0238">DNA-binding</keyword>
<keyword id="KW-0547">Nucleotide-binding</keyword>
<keyword id="KW-1185">Reference proteome</keyword>
<keyword id="KW-0742">SOS response</keyword>
<comment type="function">
    <text evidence="1">Can catalyze the hydrolysis of ATP in the presence of single-stranded DNA, the ATP-dependent uptake of single-stranded DNA by duplex DNA, and the ATP-dependent hybridization of homologous single-stranded DNAs. It interacts with LexA causing its activation and leading to its autocatalytic cleavage.</text>
</comment>
<comment type="subcellular location">
    <subcellularLocation>
        <location evidence="1">Cytoplasm</location>
    </subcellularLocation>
</comment>
<comment type="similarity">
    <text evidence="1">Belongs to the RecA family.</text>
</comment>
<comment type="sequence caution" evidence="2">
    <conflict type="erroneous initiation">
        <sequence resource="EMBL-CDS" id="AAS05165"/>
    </conflict>
</comment>
<proteinExistence type="inferred from homology"/>
<sequence>MTQAPDREKALELAMAQIEKSYGKGSVMRLGDEMRQPISVIPTGSIALDVALGIGGLPRGRVVEIYGPESSGKTTVALHAVANAQAAGGVAAFIDAEHALDPEYAKKLGVDTDSLLVSQPDTGEQALEIADMLIRSGALDILVIDSVAALVPRAELEGEMGDSHVGLQARLMSQALRKMTGALNNSGTTAIFINQLREKIGVMFGSPETTTGGKALKFYASVRMDVRRIETLKDGTNAVGNRTRVKIVKNKVSPPFKQAEFDILYGRGISREGSLIDMGVDQGFIRKSGSWFTYEGEQLGQGKENARTFLMENDEVANEIEKKIKEKLGIGAVVTDDLSDDGVLPAPVDF</sequence>
<evidence type="ECO:0000255" key="1">
    <source>
        <dbReference type="HAMAP-Rule" id="MF_00268"/>
    </source>
</evidence>
<evidence type="ECO:0000305" key="2"/>
<organism>
    <name type="scientific">Mycolicibacterium paratuberculosis (strain ATCC BAA-968 / K-10)</name>
    <name type="common">Mycobacterium paratuberculosis</name>
    <dbReference type="NCBI Taxonomy" id="262316"/>
    <lineage>
        <taxon>Bacteria</taxon>
        <taxon>Bacillati</taxon>
        <taxon>Actinomycetota</taxon>
        <taxon>Actinomycetes</taxon>
        <taxon>Mycobacteriales</taxon>
        <taxon>Mycobacteriaceae</taxon>
        <taxon>Mycobacterium</taxon>
        <taxon>Mycobacterium avium complex (MAC)</taxon>
    </lineage>
</organism>
<feature type="chain" id="PRO_0000122763" description="Protein RecA">
    <location>
        <begin position="1"/>
        <end position="350"/>
    </location>
</feature>
<feature type="binding site" evidence="1">
    <location>
        <begin position="67"/>
        <end position="74"/>
    </location>
    <ligand>
        <name>ATP</name>
        <dbReference type="ChEBI" id="CHEBI:30616"/>
    </ligand>
</feature>
<accession>P62219</accession>
<reference key="1">
    <citation type="journal article" date="2005" name="Proc. Natl. Acad. Sci. U.S.A.">
        <title>The complete genome sequence of Mycobacterium avium subspecies paratuberculosis.</title>
        <authorList>
            <person name="Li L."/>
            <person name="Bannantine J.P."/>
            <person name="Zhang Q."/>
            <person name="Amonsin A."/>
            <person name="May B.J."/>
            <person name="Alt D."/>
            <person name="Banerji N."/>
            <person name="Kanjilal S."/>
            <person name="Kapur V."/>
        </authorList>
    </citation>
    <scope>NUCLEOTIDE SEQUENCE [LARGE SCALE GENOMIC DNA]</scope>
    <source>
        <strain>ATCC BAA-968 / K-10</strain>
    </source>
</reference>
<protein>
    <recommendedName>
        <fullName evidence="1">Protein RecA</fullName>
    </recommendedName>
    <alternativeName>
        <fullName evidence="1">Recombinase A</fullName>
    </alternativeName>
</protein>